<evidence type="ECO:0000255" key="1">
    <source>
        <dbReference type="HAMAP-Rule" id="MF_00074"/>
    </source>
</evidence>
<sequence length="213" mass="23473">MSADIRFDSLKTIVPAVSRETADRLIAFEDLFRKWSKAINLASPSTLADLWNRHILDSAQLFPLAKEATRWLDIGSGGGFPGIVTACFLAERSGGCIDLVESAGKKAAFLRTAAGHLHVPARVHSARIESMWEKIETPQVVTARALASLGDLFTLAEPWLSDGAKALFQKGRDYQREIDESRVGWSFDLVKHPSAIDQASVILEISNLRRKTD</sequence>
<feature type="chain" id="PRO_1000075215" description="Ribosomal RNA small subunit methyltransferase G">
    <location>
        <begin position="1"/>
        <end position="213"/>
    </location>
</feature>
<feature type="binding site" evidence="1">
    <location>
        <position position="75"/>
    </location>
    <ligand>
        <name>S-adenosyl-L-methionine</name>
        <dbReference type="ChEBI" id="CHEBI:59789"/>
    </ligand>
</feature>
<feature type="binding site" evidence="1">
    <location>
        <position position="80"/>
    </location>
    <ligand>
        <name>S-adenosyl-L-methionine</name>
        <dbReference type="ChEBI" id="CHEBI:59789"/>
    </ligand>
</feature>
<feature type="binding site" evidence="1">
    <location>
        <begin position="128"/>
        <end position="129"/>
    </location>
    <ligand>
        <name>S-adenosyl-L-methionine</name>
        <dbReference type="ChEBI" id="CHEBI:59789"/>
    </ligand>
</feature>
<feature type="binding site" evidence="1">
    <location>
        <position position="144"/>
    </location>
    <ligand>
        <name>S-adenosyl-L-methionine</name>
        <dbReference type="ChEBI" id="CHEBI:59789"/>
    </ligand>
</feature>
<protein>
    <recommendedName>
        <fullName evidence="1">Ribosomal RNA small subunit methyltransferase G</fullName>
        <ecNumber evidence="1">2.1.1.170</ecNumber>
    </recommendedName>
    <alternativeName>
        <fullName evidence="1">16S rRNA 7-methylguanosine methyltransferase</fullName>
        <shortName evidence="1">16S rRNA m7G methyltransferase</shortName>
    </alternativeName>
</protein>
<dbReference type="EC" id="2.1.1.170" evidence="1"/>
<dbReference type="EMBL" id="CP000872">
    <property type="protein sequence ID" value="ABX63090.1"/>
    <property type="molecule type" value="Genomic_DNA"/>
</dbReference>
<dbReference type="RefSeq" id="WP_002967027.1">
    <property type="nucleotide sequence ID" value="NC_010103.1"/>
</dbReference>
<dbReference type="SMR" id="A9M9E3"/>
<dbReference type="GeneID" id="97534679"/>
<dbReference type="KEGG" id="bcs:BCAN_A2106"/>
<dbReference type="HOGENOM" id="CLU_065341_1_1_5"/>
<dbReference type="PhylomeDB" id="A9M9E3"/>
<dbReference type="Proteomes" id="UP000001385">
    <property type="component" value="Chromosome I"/>
</dbReference>
<dbReference type="GO" id="GO:0005829">
    <property type="term" value="C:cytosol"/>
    <property type="evidence" value="ECO:0007669"/>
    <property type="project" value="TreeGrafter"/>
</dbReference>
<dbReference type="GO" id="GO:0070043">
    <property type="term" value="F:rRNA (guanine-N7-)-methyltransferase activity"/>
    <property type="evidence" value="ECO:0007669"/>
    <property type="project" value="UniProtKB-UniRule"/>
</dbReference>
<dbReference type="Gene3D" id="3.40.50.150">
    <property type="entry name" value="Vaccinia Virus protein VP39"/>
    <property type="match status" value="1"/>
</dbReference>
<dbReference type="HAMAP" id="MF_00074">
    <property type="entry name" value="16SrRNA_methyltr_G"/>
    <property type="match status" value="1"/>
</dbReference>
<dbReference type="InterPro" id="IPR003682">
    <property type="entry name" value="rRNA_ssu_MeTfrase_G"/>
</dbReference>
<dbReference type="InterPro" id="IPR029063">
    <property type="entry name" value="SAM-dependent_MTases_sf"/>
</dbReference>
<dbReference type="NCBIfam" id="TIGR00138">
    <property type="entry name" value="rsmG_gidB"/>
    <property type="match status" value="1"/>
</dbReference>
<dbReference type="PANTHER" id="PTHR31760">
    <property type="entry name" value="S-ADENOSYL-L-METHIONINE-DEPENDENT METHYLTRANSFERASES SUPERFAMILY PROTEIN"/>
    <property type="match status" value="1"/>
</dbReference>
<dbReference type="PANTHER" id="PTHR31760:SF0">
    <property type="entry name" value="S-ADENOSYL-L-METHIONINE-DEPENDENT METHYLTRANSFERASES SUPERFAMILY PROTEIN"/>
    <property type="match status" value="1"/>
</dbReference>
<dbReference type="Pfam" id="PF02527">
    <property type="entry name" value="GidB"/>
    <property type="match status" value="1"/>
</dbReference>
<dbReference type="PIRSF" id="PIRSF003078">
    <property type="entry name" value="GidB"/>
    <property type="match status" value="1"/>
</dbReference>
<dbReference type="SUPFAM" id="SSF53335">
    <property type="entry name" value="S-adenosyl-L-methionine-dependent methyltransferases"/>
    <property type="match status" value="1"/>
</dbReference>
<reference key="1">
    <citation type="submission" date="2007-10" db="EMBL/GenBank/DDBJ databases">
        <title>Brucella canis ATCC 23365 whole genome shotgun sequencing project.</title>
        <authorList>
            <person name="Setubal J.C."/>
            <person name="Bowns C."/>
            <person name="Boyle S."/>
            <person name="Crasta O.R."/>
            <person name="Czar M.J."/>
            <person name="Dharmanolla C."/>
            <person name="Gillespie J.J."/>
            <person name="Kenyon R.W."/>
            <person name="Lu J."/>
            <person name="Mane S."/>
            <person name="Mohapatra S."/>
            <person name="Nagrani S."/>
            <person name="Purkayastha A."/>
            <person name="Rajasimha H.K."/>
            <person name="Shallom J.M."/>
            <person name="Shallom S."/>
            <person name="Shukla M."/>
            <person name="Snyder E.E."/>
            <person name="Sobral B.W."/>
            <person name="Wattam A.R."/>
            <person name="Will R."/>
            <person name="Williams K."/>
            <person name="Yoo H."/>
            <person name="Bruce D."/>
            <person name="Detter C."/>
            <person name="Munk C."/>
            <person name="Brettin T.S."/>
        </authorList>
    </citation>
    <scope>NUCLEOTIDE SEQUENCE [LARGE SCALE GENOMIC DNA]</scope>
    <source>
        <strain>ATCC 23365 / NCTC 10854 / RM-666</strain>
    </source>
</reference>
<comment type="function">
    <text evidence="1">Specifically methylates the N7 position of guanine in position 527 of 16S rRNA.</text>
</comment>
<comment type="catalytic activity">
    <reaction evidence="1">
        <text>guanosine(527) in 16S rRNA + S-adenosyl-L-methionine = N(7)-methylguanosine(527) in 16S rRNA + S-adenosyl-L-homocysteine</text>
        <dbReference type="Rhea" id="RHEA:42732"/>
        <dbReference type="Rhea" id="RHEA-COMP:10209"/>
        <dbReference type="Rhea" id="RHEA-COMP:10210"/>
        <dbReference type="ChEBI" id="CHEBI:57856"/>
        <dbReference type="ChEBI" id="CHEBI:59789"/>
        <dbReference type="ChEBI" id="CHEBI:74269"/>
        <dbReference type="ChEBI" id="CHEBI:74480"/>
        <dbReference type="EC" id="2.1.1.170"/>
    </reaction>
</comment>
<comment type="subcellular location">
    <subcellularLocation>
        <location evidence="1">Cytoplasm</location>
    </subcellularLocation>
</comment>
<comment type="similarity">
    <text evidence="1">Belongs to the methyltransferase superfamily. RNA methyltransferase RsmG family.</text>
</comment>
<keyword id="KW-0963">Cytoplasm</keyword>
<keyword id="KW-0489">Methyltransferase</keyword>
<keyword id="KW-1185">Reference proteome</keyword>
<keyword id="KW-0698">rRNA processing</keyword>
<keyword id="KW-0949">S-adenosyl-L-methionine</keyword>
<keyword id="KW-0808">Transferase</keyword>
<accession>A9M9E3</accession>
<organism>
    <name type="scientific">Brucella canis (strain ATCC 23365 / NCTC 10854 / RM-666)</name>
    <dbReference type="NCBI Taxonomy" id="483179"/>
    <lineage>
        <taxon>Bacteria</taxon>
        <taxon>Pseudomonadati</taxon>
        <taxon>Pseudomonadota</taxon>
        <taxon>Alphaproteobacteria</taxon>
        <taxon>Hyphomicrobiales</taxon>
        <taxon>Brucellaceae</taxon>
        <taxon>Brucella/Ochrobactrum group</taxon>
        <taxon>Brucella</taxon>
    </lineage>
</organism>
<proteinExistence type="inferred from homology"/>
<name>RSMG_BRUC2</name>
<gene>
    <name evidence="1" type="primary">rsmG</name>
    <name type="ordered locus">BCAN_A2106</name>
</gene>